<proteinExistence type="evidence at protein level"/>
<protein>
    <recommendedName>
        <fullName>D-tagatose-1,6-bisphosphate aldolase subunit KbaY</fullName>
        <shortName>TBPA</shortName>
        <shortName>TagBP aldolase</shortName>
        <ecNumber>4.1.2.40</ecNumber>
    </recommendedName>
    <alternativeName>
        <fullName>D-tagatose-bisphosphate aldolase class II</fullName>
    </alternativeName>
    <alternativeName>
        <fullName>Ketose 1,6-bisphosphate aldolase class II</fullName>
    </alternativeName>
    <alternativeName>
        <fullName>Tagatose-bisphosphate aldolase</fullName>
    </alternativeName>
</protein>
<reference key="1">
    <citation type="journal article" date="2000" name="Mol. Microbiol.">
        <title>Pathways for the utilization of N-acetyl-galactosamine and galactosamine in Escherichia coli.</title>
        <authorList>
            <person name="Brinkkoetter A."/>
            <person name="Kloess H."/>
            <person name="Alpert C.-A."/>
            <person name="Lengeler J.W."/>
        </authorList>
    </citation>
    <scope>NUCLEOTIDE SEQUENCE [GENOMIC DNA]</scope>
    <scope>FUNCTION IN THE CATABOLISM OF N-ACETYLGALACTOSAMINE AND D-GALACTOSAMINE</scope>
    <source>
        <strain>C</strain>
    </source>
</reference>
<reference key="2">
    <citation type="journal article" date="2002" name="Arch. Microbiol.">
        <title>Two class II D-tagatose-bisphosphate aldolases from enteric bacteria.</title>
        <authorList>
            <person name="Brinkkoetter A."/>
            <person name="Shakeri-Garakani A."/>
            <person name="Lengeler J.W."/>
        </authorList>
    </citation>
    <scope>FUNCTION</scope>
    <scope>COMPLEX WITH KBAZ</scope>
    <source>
        <strain>C</strain>
    </source>
</reference>
<name>KBAY_ECOLX</name>
<feature type="chain" id="PRO_0000355320" description="D-tagatose-1,6-bisphosphate aldolase subunit KbaY">
    <location>
        <begin position="1"/>
        <end position="286"/>
    </location>
</feature>
<feature type="active site" description="Proton donor" evidence="1">
    <location>
        <position position="82"/>
    </location>
</feature>
<feature type="binding site" evidence="1">
    <location>
        <position position="83"/>
    </location>
    <ligand>
        <name>Zn(2+)</name>
        <dbReference type="ChEBI" id="CHEBI:29105"/>
        <note>catalytic</note>
    </ligand>
</feature>
<feature type="binding site" evidence="1">
    <location>
        <position position="180"/>
    </location>
    <ligand>
        <name>Zn(2+)</name>
        <dbReference type="ChEBI" id="CHEBI:29105"/>
        <note>catalytic</note>
    </ligand>
</feature>
<feature type="binding site" evidence="1">
    <location>
        <position position="181"/>
    </location>
    <ligand>
        <name>dihydroxyacetone phosphate</name>
        <dbReference type="ChEBI" id="CHEBI:57642"/>
    </ligand>
</feature>
<feature type="binding site" evidence="1">
    <location>
        <position position="208"/>
    </location>
    <ligand>
        <name>Zn(2+)</name>
        <dbReference type="ChEBI" id="CHEBI:29105"/>
        <note>catalytic</note>
    </ligand>
</feature>
<feature type="binding site" evidence="1">
    <location>
        <begin position="209"/>
        <end position="211"/>
    </location>
    <ligand>
        <name>dihydroxyacetone phosphate</name>
        <dbReference type="ChEBI" id="CHEBI:57642"/>
    </ligand>
</feature>
<feature type="binding site" evidence="1">
    <location>
        <begin position="230"/>
        <end position="233"/>
    </location>
    <ligand>
        <name>dihydroxyacetone phosphate</name>
        <dbReference type="ChEBI" id="CHEBI:57642"/>
    </ligand>
</feature>
<organism>
    <name type="scientific">Escherichia coli</name>
    <dbReference type="NCBI Taxonomy" id="562"/>
    <lineage>
        <taxon>Bacteria</taxon>
        <taxon>Pseudomonadati</taxon>
        <taxon>Pseudomonadota</taxon>
        <taxon>Gammaproteobacteria</taxon>
        <taxon>Enterobacterales</taxon>
        <taxon>Enterobacteriaceae</taxon>
        <taxon>Escherichia</taxon>
    </lineage>
</organism>
<keyword id="KW-0456">Lyase</keyword>
<keyword id="KW-0479">Metal-binding</keyword>
<keyword id="KW-0862">Zinc</keyword>
<accession>Q9KIP8</accession>
<comment type="function">
    <text evidence="2 3">Catalytic subunit of the tagatose-1,6-bisphosphate aldolase KbaYZ, which catalyzes the reversible aldol condensation of dihydroxyacetone phosphate (DHAP or glycerone-phosphate) with glyceraldehyde 3-phosphate (G3P) to produce tagatose 1,6-bisphosphate (TBP). Requires KbaZ subunit for full activity and stability. Is involved in the catabolism of N-acetylgalactosamine and D-galactosamine.</text>
</comment>
<comment type="catalytic activity">
    <reaction>
        <text>D-tagatofuranose 1,6-bisphosphate = D-glyceraldehyde 3-phosphate + dihydroxyacetone phosphate</text>
        <dbReference type="Rhea" id="RHEA:22948"/>
        <dbReference type="ChEBI" id="CHEBI:57642"/>
        <dbReference type="ChEBI" id="CHEBI:58694"/>
        <dbReference type="ChEBI" id="CHEBI:59776"/>
        <dbReference type="EC" id="4.1.2.40"/>
    </reaction>
</comment>
<comment type="cofactor">
    <cofactor evidence="1">
        <name>Zn(2+)</name>
        <dbReference type="ChEBI" id="CHEBI:29105"/>
    </cofactor>
    <text evidence="1">Binds 1 zinc ion per subunit.</text>
</comment>
<comment type="pathway">
    <text>Carbohydrate metabolism; D-tagatose 6-phosphate degradation; D-glyceraldehyde 3-phosphate and glycerone phosphate from D-tagatose 6-phosphate: step 2/2.</text>
</comment>
<comment type="subunit">
    <text evidence="1">Homotetramer (By similarity). Forms a complex with KbaZ.</text>
</comment>
<comment type="similarity">
    <text evidence="4">Belongs to the class II fructose-bisphosphate aldolase family. TagBP aldolase KbaY subfamily.</text>
</comment>
<sequence>MSIISTKYLLQDAQANGYAVPAFNIHNAETIQAILEVCSEMRSPVILAGTPGTFKHIALEEIYALCSAYSTTYNMPLALHLDHHESLDDIRRKVHAGVRSAMIDGSHFPFAENVKLVKSVVDFCHSQDCSVEAELGRLGGVEDDMSVDAESAFLTDPQEAKRFVELTGVDSLAVAIGTAHGLYSKTPKIDFQRLAEIREVVDVPLVLHGASDVPDEFVRRTIELGVTKVNVATELKIAFAGAVKAWFAENPQGNDPRNYMRVGMDAMKEVVRNKINVCGSANRISA</sequence>
<evidence type="ECO:0000250" key="1"/>
<evidence type="ECO:0000269" key="2">
    <source>
    </source>
</evidence>
<evidence type="ECO:0000269" key="3">
    <source>
    </source>
</evidence>
<evidence type="ECO:0000305" key="4"/>
<dbReference type="EC" id="4.1.2.40"/>
<dbReference type="EMBL" id="AF228498">
    <property type="protein sequence ID" value="AAF81089.1"/>
    <property type="molecule type" value="Genomic_DNA"/>
</dbReference>
<dbReference type="SMR" id="Q9KIP8"/>
<dbReference type="STRING" id="585034.ECIAI1_3287"/>
<dbReference type="eggNOG" id="COG0191">
    <property type="taxonomic scope" value="Bacteria"/>
</dbReference>
<dbReference type="UniPathway" id="UPA00704">
    <property type="reaction ID" value="UER00716"/>
</dbReference>
<dbReference type="GO" id="GO:0005829">
    <property type="term" value="C:cytosol"/>
    <property type="evidence" value="ECO:0007669"/>
    <property type="project" value="TreeGrafter"/>
</dbReference>
<dbReference type="GO" id="GO:0009025">
    <property type="term" value="F:tagatose-bisphosphate aldolase activity"/>
    <property type="evidence" value="ECO:0007669"/>
    <property type="project" value="UniProtKB-UniRule"/>
</dbReference>
<dbReference type="GO" id="GO:0008270">
    <property type="term" value="F:zinc ion binding"/>
    <property type="evidence" value="ECO:0007669"/>
    <property type="project" value="UniProtKB-UniRule"/>
</dbReference>
<dbReference type="GO" id="GO:0005975">
    <property type="term" value="P:carbohydrate metabolic process"/>
    <property type="evidence" value="ECO:0007669"/>
    <property type="project" value="InterPro"/>
</dbReference>
<dbReference type="GO" id="GO:2001059">
    <property type="term" value="P:D-tagatose 6-phosphate catabolic process"/>
    <property type="evidence" value="ECO:0007669"/>
    <property type="project" value="UniProtKB-UniRule"/>
</dbReference>
<dbReference type="FunFam" id="3.20.20.70:FF:000043">
    <property type="entry name" value="D-tagatose-1,6-bisphosphate aldolase subunit GatY"/>
    <property type="match status" value="1"/>
</dbReference>
<dbReference type="Gene3D" id="3.20.20.70">
    <property type="entry name" value="Aldolase class I"/>
    <property type="match status" value="1"/>
</dbReference>
<dbReference type="HAMAP" id="MF_01293">
    <property type="entry name" value="TagBP_aldolase_KbaY"/>
    <property type="match status" value="1"/>
</dbReference>
<dbReference type="InterPro" id="IPR013785">
    <property type="entry name" value="Aldolase_TIM"/>
</dbReference>
<dbReference type="InterPro" id="IPR050246">
    <property type="entry name" value="Class_II_FBP_aldolase"/>
</dbReference>
<dbReference type="InterPro" id="IPR000771">
    <property type="entry name" value="FBA_II"/>
</dbReference>
<dbReference type="InterPro" id="IPR023788">
    <property type="entry name" value="TagBP_ald_KbaY"/>
</dbReference>
<dbReference type="InterPro" id="IPR011288">
    <property type="entry name" value="TagBP_ald_KbaY/GatY"/>
</dbReference>
<dbReference type="NCBIfam" id="TIGR00167">
    <property type="entry name" value="cbbA"/>
    <property type="match status" value="1"/>
</dbReference>
<dbReference type="NCBIfam" id="NF006626">
    <property type="entry name" value="PRK09195.1"/>
    <property type="match status" value="1"/>
</dbReference>
<dbReference type="NCBIfam" id="NF009374">
    <property type="entry name" value="PRK12737.1"/>
    <property type="match status" value="1"/>
</dbReference>
<dbReference type="NCBIfam" id="NF009375">
    <property type="entry name" value="PRK12738.1"/>
    <property type="match status" value="1"/>
</dbReference>
<dbReference type="NCBIfam" id="TIGR01858">
    <property type="entry name" value="tag_bisphos_ald"/>
    <property type="match status" value="1"/>
</dbReference>
<dbReference type="PANTHER" id="PTHR30304">
    <property type="entry name" value="D-TAGATOSE-1,6-BISPHOSPHATE ALDOLASE"/>
    <property type="match status" value="1"/>
</dbReference>
<dbReference type="PANTHER" id="PTHR30304:SF0">
    <property type="entry name" value="D-TAGATOSE-1,6-BISPHOSPHATE ALDOLASE SUBUNIT GATY-RELATED"/>
    <property type="match status" value="1"/>
</dbReference>
<dbReference type="Pfam" id="PF01116">
    <property type="entry name" value="F_bP_aldolase"/>
    <property type="match status" value="1"/>
</dbReference>
<dbReference type="PIRSF" id="PIRSF001359">
    <property type="entry name" value="F_bP_aldolase_II"/>
    <property type="match status" value="1"/>
</dbReference>
<dbReference type="SUPFAM" id="SSF51569">
    <property type="entry name" value="Aldolase"/>
    <property type="match status" value="1"/>
</dbReference>
<dbReference type="PROSITE" id="PS00602">
    <property type="entry name" value="ALDOLASE_CLASS_II_1"/>
    <property type="match status" value="1"/>
</dbReference>
<dbReference type="PROSITE" id="PS00806">
    <property type="entry name" value="ALDOLASE_CLASS_II_2"/>
    <property type="match status" value="1"/>
</dbReference>
<gene>
    <name type="primary">kbaY</name>
    <name type="synonym">agaY</name>
</gene>